<feature type="chain" id="PRO_0000100019" description="Dual-specificity RNA pseudouridine synthase RluF">
    <location>
        <begin position="1"/>
        <end position="289"/>
    </location>
</feature>
<feature type="domain" description="S4 RNA-binding" evidence="2">
    <location>
        <begin position="7"/>
        <end position="74"/>
    </location>
</feature>
<feature type="region of interest" description="Interaction with RNA" evidence="1">
    <location>
        <begin position="105"/>
        <end position="108"/>
    </location>
</feature>
<feature type="region of interest" description="Interaction with RNA" evidence="1">
    <location>
        <begin position="187"/>
        <end position="190"/>
    </location>
</feature>
<feature type="region of interest" description="Disordered" evidence="3">
    <location>
        <begin position="241"/>
        <end position="289"/>
    </location>
</feature>
<feature type="active site" description="Nucleophile" evidence="1">
    <location>
        <position position="107"/>
    </location>
</feature>
<name>RLUF_SALTI</name>
<sequence length="289" mass="32177">MLTDTSTRLNKYISESGICSRREADRFIEQGNVFINGKRAAIGDQVVAGDVVKVNGRLIEPREADDLVLIALNKPVGIVSTTEDGERDNIVDFVNHSKRIFPIGRLDKDSQGLIFLTNHGDLVNKILRAGNDHEKEYLVTVDKPITDEFIRGMGAGVPILGTVTKKCKVKKEAPFVFRITLVQGLNRQIRRMCEYFGYEVTKLERTRIMNVSLSGIPLGEWRDLTDDELIDLFKLIEGSSSEAKPKAKAKPKTAGIKRPVVAIEKSNEKARPASSGKRFTSPGRKKKGR</sequence>
<evidence type="ECO:0000250" key="1">
    <source>
        <dbReference type="UniProtKB" id="P32684"/>
    </source>
</evidence>
<evidence type="ECO:0000255" key="2">
    <source>
        <dbReference type="PROSITE-ProRule" id="PRU00182"/>
    </source>
</evidence>
<evidence type="ECO:0000256" key="3">
    <source>
        <dbReference type="SAM" id="MobiDB-lite"/>
    </source>
</evidence>
<evidence type="ECO:0000305" key="4"/>
<accession>Q8Z1V3</accession>
<keyword id="KW-0413">Isomerase</keyword>
<keyword id="KW-0694">RNA-binding</keyword>
<keyword id="KW-0698">rRNA processing</keyword>
<keyword id="KW-0819">tRNA processing</keyword>
<comment type="function">
    <text evidence="1">Dual specificity enzyme that catalyzes the synthesis of pseudouridine from uracil-2604 in 23S ribosomal RNA and from uracil-35 in the anticodon of tRNA(Tyr).</text>
</comment>
<comment type="catalytic activity">
    <reaction evidence="1">
        <text>uridine(2604) in 23S rRNA = pseudouridine(2604) in 23S rRNA</text>
        <dbReference type="Rhea" id="RHEA:38875"/>
        <dbReference type="Rhea" id="RHEA-COMP:10093"/>
        <dbReference type="Rhea" id="RHEA-COMP:10094"/>
        <dbReference type="ChEBI" id="CHEBI:65314"/>
        <dbReference type="ChEBI" id="CHEBI:65315"/>
        <dbReference type="EC" id="5.4.99.21"/>
    </reaction>
</comment>
<comment type="catalytic activity">
    <reaction evidence="1">
        <text>uridine(35) in tRNA(Tyr) = pseudouridine(35) in tRNA(Tyr)</text>
        <dbReference type="Rhea" id="RHEA:60556"/>
        <dbReference type="Rhea" id="RHEA-COMP:15607"/>
        <dbReference type="Rhea" id="RHEA-COMP:15608"/>
        <dbReference type="ChEBI" id="CHEBI:65314"/>
        <dbReference type="ChEBI" id="CHEBI:65315"/>
    </reaction>
</comment>
<comment type="subunit">
    <text evidence="1">Monomer.</text>
</comment>
<comment type="similarity">
    <text evidence="4">Belongs to the pseudouridine synthase RsuA family.</text>
</comment>
<organism>
    <name type="scientific">Salmonella typhi</name>
    <dbReference type="NCBI Taxonomy" id="90370"/>
    <lineage>
        <taxon>Bacteria</taxon>
        <taxon>Pseudomonadati</taxon>
        <taxon>Pseudomonadota</taxon>
        <taxon>Gammaproteobacteria</taxon>
        <taxon>Enterobacterales</taxon>
        <taxon>Enterobacteriaceae</taxon>
        <taxon>Salmonella</taxon>
    </lineage>
</organism>
<protein>
    <recommendedName>
        <fullName evidence="1">Dual-specificity RNA pseudouridine synthase RluF</fullName>
        <ecNumber evidence="1">5.4.99.-</ecNumber>
        <ecNumber evidence="1">5.4.99.21</ecNumber>
    </recommendedName>
    <alternativeName>
        <fullName evidence="1">23S rRNA pseudouridine(2604) synthase</fullName>
    </alternativeName>
    <alternativeName>
        <fullName evidence="1">Ribosomal large subunit pseudouridine synthase F</fullName>
    </alternativeName>
    <alternativeName>
        <fullName evidence="1">rRNA pseudouridylate synthase F</fullName>
    </alternativeName>
    <alternativeName>
        <fullName evidence="1">rRNA-uridine isomerase F</fullName>
    </alternativeName>
    <alternativeName>
        <fullName evidence="1">tRNA(Tyr) pseudouridine(35) synthase</fullName>
    </alternativeName>
</protein>
<dbReference type="EC" id="5.4.99.-" evidence="1"/>
<dbReference type="EC" id="5.4.99.21" evidence="1"/>
<dbReference type="EMBL" id="AL513382">
    <property type="protein sequence ID" value="CAD09198.1"/>
    <property type="molecule type" value="Genomic_DNA"/>
</dbReference>
<dbReference type="EMBL" id="AE014613">
    <property type="protein sequence ID" value="AAO71584.1"/>
    <property type="molecule type" value="Genomic_DNA"/>
</dbReference>
<dbReference type="RefSeq" id="NP_458512.1">
    <property type="nucleotide sequence ID" value="NC_003198.1"/>
</dbReference>
<dbReference type="RefSeq" id="WP_000954615.1">
    <property type="nucleotide sequence ID" value="NZ_WSUR01000027.1"/>
</dbReference>
<dbReference type="SMR" id="Q8Z1V3"/>
<dbReference type="STRING" id="220341.gene:17588242"/>
<dbReference type="KEGG" id="stt:t4120"/>
<dbReference type="KEGG" id="sty:STY4410"/>
<dbReference type="PATRIC" id="fig|220341.7.peg.4510"/>
<dbReference type="eggNOG" id="COG1187">
    <property type="taxonomic scope" value="Bacteria"/>
</dbReference>
<dbReference type="HOGENOM" id="CLU_024979_6_1_6"/>
<dbReference type="OMA" id="SMEFAPF"/>
<dbReference type="OrthoDB" id="9807213at2"/>
<dbReference type="Proteomes" id="UP000000541">
    <property type="component" value="Chromosome"/>
</dbReference>
<dbReference type="Proteomes" id="UP000002670">
    <property type="component" value="Chromosome"/>
</dbReference>
<dbReference type="GO" id="GO:0160138">
    <property type="term" value="F:23S rRNA pseudouridine(2604) synthase activity"/>
    <property type="evidence" value="ECO:0007669"/>
    <property type="project" value="UniProtKB-EC"/>
</dbReference>
<dbReference type="GO" id="GO:0003723">
    <property type="term" value="F:RNA binding"/>
    <property type="evidence" value="ECO:0007669"/>
    <property type="project" value="UniProtKB-KW"/>
</dbReference>
<dbReference type="GO" id="GO:0000455">
    <property type="term" value="P:enzyme-directed rRNA pseudouridine synthesis"/>
    <property type="evidence" value="ECO:0007669"/>
    <property type="project" value="UniProtKB-ARBA"/>
</dbReference>
<dbReference type="GO" id="GO:0008033">
    <property type="term" value="P:tRNA processing"/>
    <property type="evidence" value="ECO:0007669"/>
    <property type="project" value="UniProtKB-KW"/>
</dbReference>
<dbReference type="CDD" id="cd02554">
    <property type="entry name" value="PseudoU_synth_RluF"/>
    <property type="match status" value="1"/>
</dbReference>
<dbReference type="CDD" id="cd00165">
    <property type="entry name" value="S4"/>
    <property type="match status" value="1"/>
</dbReference>
<dbReference type="FunFam" id="3.10.290.10:FF:000003">
    <property type="entry name" value="Pseudouridine synthase"/>
    <property type="match status" value="1"/>
</dbReference>
<dbReference type="FunFam" id="3.30.70.1560:FF:000002">
    <property type="entry name" value="Pseudouridine synthase"/>
    <property type="match status" value="1"/>
</dbReference>
<dbReference type="Gene3D" id="3.30.70.1560">
    <property type="entry name" value="Alpha-L RNA-binding motif"/>
    <property type="match status" value="1"/>
</dbReference>
<dbReference type="Gene3D" id="3.30.70.580">
    <property type="entry name" value="Pseudouridine synthase I, catalytic domain, N-terminal subdomain"/>
    <property type="match status" value="1"/>
</dbReference>
<dbReference type="Gene3D" id="3.10.290.10">
    <property type="entry name" value="RNA-binding S4 domain"/>
    <property type="match status" value="1"/>
</dbReference>
<dbReference type="InterPro" id="IPR042092">
    <property type="entry name" value="PsdUridine_s_RsuA/RluB/E/F_cat"/>
</dbReference>
<dbReference type="InterPro" id="IPR020103">
    <property type="entry name" value="PsdUridine_synth_cat_dom_sf"/>
</dbReference>
<dbReference type="InterPro" id="IPR006145">
    <property type="entry name" value="PsdUridine_synth_RsuA/RluA"/>
</dbReference>
<dbReference type="InterPro" id="IPR000748">
    <property type="entry name" value="PsdUridine_synth_RsuA/RluB/E/F"/>
</dbReference>
<dbReference type="InterPro" id="IPR018496">
    <property type="entry name" value="PsdUridine_synth_RsuA/RluB_CS"/>
</dbReference>
<dbReference type="InterPro" id="IPR050343">
    <property type="entry name" value="RsuA_PseudoU_synthase"/>
</dbReference>
<dbReference type="InterPro" id="IPR002942">
    <property type="entry name" value="S4_RNA-bd"/>
</dbReference>
<dbReference type="InterPro" id="IPR036986">
    <property type="entry name" value="S4_RNA-bd_sf"/>
</dbReference>
<dbReference type="InterPro" id="IPR020094">
    <property type="entry name" value="TruA/RsuA/RluB/E/F_N"/>
</dbReference>
<dbReference type="NCBIfam" id="NF007784">
    <property type="entry name" value="PRK10475.1"/>
    <property type="match status" value="1"/>
</dbReference>
<dbReference type="NCBIfam" id="TIGR00093">
    <property type="entry name" value="pseudouridine synthase"/>
    <property type="match status" value="1"/>
</dbReference>
<dbReference type="PANTHER" id="PTHR47683">
    <property type="entry name" value="PSEUDOURIDINE SYNTHASE FAMILY PROTEIN-RELATED"/>
    <property type="match status" value="1"/>
</dbReference>
<dbReference type="PANTHER" id="PTHR47683:SF2">
    <property type="entry name" value="RNA-BINDING S4 DOMAIN-CONTAINING PROTEIN"/>
    <property type="match status" value="1"/>
</dbReference>
<dbReference type="Pfam" id="PF00849">
    <property type="entry name" value="PseudoU_synth_2"/>
    <property type="match status" value="1"/>
</dbReference>
<dbReference type="Pfam" id="PF01479">
    <property type="entry name" value="S4"/>
    <property type="match status" value="1"/>
</dbReference>
<dbReference type="SMART" id="SM00363">
    <property type="entry name" value="S4"/>
    <property type="match status" value="1"/>
</dbReference>
<dbReference type="SUPFAM" id="SSF55174">
    <property type="entry name" value="Alpha-L RNA-binding motif"/>
    <property type="match status" value="1"/>
</dbReference>
<dbReference type="SUPFAM" id="SSF55120">
    <property type="entry name" value="Pseudouridine synthase"/>
    <property type="match status" value="1"/>
</dbReference>
<dbReference type="PROSITE" id="PS01149">
    <property type="entry name" value="PSI_RSU"/>
    <property type="match status" value="1"/>
</dbReference>
<dbReference type="PROSITE" id="PS50889">
    <property type="entry name" value="S4"/>
    <property type="match status" value="1"/>
</dbReference>
<reference key="1">
    <citation type="journal article" date="2001" name="Nature">
        <title>Complete genome sequence of a multiple drug resistant Salmonella enterica serovar Typhi CT18.</title>
        <authorList>
            <person name="Parkhill J."/>
            <person name="Dougan G."/>
            <person name="James K.D."/>
            <person name="Thomson N.R."/>
            <person name="Pickard D."/>
            <person name="Wain J."/>
            <person name="Churcher C.M."/>
            <person name="Mungall K.L."/>
            <person name="Bentley S.D."/>
            <person name="Holden M.T.G."/>
            <person name="Sebaihia M."/>
            <person name="Baker S."/>
            <person name="Basham D."/>
            <person name="Brooks K."/>
            <person name="Chillingworth T."/>
            <person name="Connerton P."/>
            <person name="Cronin A."/>
            <person name="Davis P."/>
            <person name="Davies R.M."/>
            <person name="Dowd L."/>
            <person name="White N."/>
            <person name="Farrar J."/>
            <person name="Feltwell T."/>
            <person name="Hamlin N."/>
            <person name="Haque A."/>
            <person name="Hien T.T."/>
            <person name="Holroyd S."/>
            <person name="Jagels K."/>
            <person name="Krogh A."/>
            <person name="Larsen T.S."/>
            <person name="Leather S."/>
            <person name="Moule S."/>
            <person name="O'Gaora P."/>
            <person name="Parry C."/>
            <person name="Quail M.A."/>
            <person name="Rutherford K.M."/>
            <person name="Simmonds M."/>
            <person name="Skelton J."/>
            <person name="Stevens K."/>
            <person name="Whitehead S."/>
            <person name="Barrell B.G."/>
        </authorList>
    </citation>
    <scope>NUCLEOTIDE SEQUENCE [LARGE SCALE GENOMIC DNA]</scope>
    <source>
        <strain>CT18</strain>
    </source>
</reference>
<reference key="2">
    <citation type="journal article" date="2003" name="J. Bacteriol.">
        <title>Comparative genomics of Salmonella enterica serovar Typhi strains Ty2 and CT18.</title>
        <authorList>
            <person name="Deng W."/>
            <person name="Liou S.-R."/>
            <person name="Plunkett G. III"/>
            <person name="Mayhew G.F."/>
            <person name="Rose D.J."/>
            <person name="Burland V."/>
            <person name="Kodoyianni V."/>
            <person name="Schwartz D.C."/>
            <person name="Blattner F.R."/>
        </authorList>
    </citation>
    <scope>NUCLEOTIDE SEQUENCE [LARGE SCALE GENOMIC DNA]</scope>
    <source>
        <strain>ATCC 700931 / Ty2</strain>
    </source>
</reference>
<proteinExistence type="inferred from homology"/>
<gene>
    <name type="primary">rluF</name>
    <name type="ordered locus">STY4410</name>
    <name type="ordered locus">t4120</name>
</gene>